<evidence type="ECO:0000250" key="1"/>
<evidence type="ECO:0000255" key="2">
    <source>
        <dbReference type="HAMAP-Rule" id="MF_00100"/>
    </source>
</evidence>
<evidence type="ECO:0000256" key="3">
    <source>
        <dbReference type="SAM" id="MobiDB-lite"/>
    </source>
</evidence>
<gene>
    <name evidence="2" type="primary">infB</name>
    <name type="ordered locus">VV2708</name>
</gene>
<sequence>MTQLTVKALSEEIGTPVDRLLEQLADAGMKKSSSDQVSDEEKQKLLTHLKKEHGDTSGDAEPTRLTLQRKTRSTLSVNAGGGKSKDVQIEVRKKRTYVKRSAIEDEAKREAEEAAQREAEEAAKRAAEEAAKREAEEAAKREAEEKAKREAEEAAKREAEKSVDRDAEEKAKRDAEGKAKRDAEEKVKQEAARKEAEELKRRQEEEAKRKAEEESQRKLEEAREMAEKNKERWSAAEENKGDMEDTDYHVTTSQYAREAEDEADRKEEEARRRKKKTKSSAKASENDERGGPRVQRGGKGGRKGKLSKPKSMQHGFDKSAVVAKSDVVIGETIVVSELANKMSVKATEVIKIMMKMGAMATINQVIDQETAQLVAEEMGHKVVLRKENELEEAVLSDRDNMFEAVPRAPVVTIMGHVDHGKTSTLDYIRRTHVASGEAGGITQHIGAYHVETENGMITFLDTPGHAAFTAMRARGAQATDIVVLVVAADDGVMPQTVEAIQHAKAAGVPLIVAVNKIDKEEANPDNVKNELSQYNVMPEEWGGENMFVHISAKQGTNIDQLLETILLQAEVLELTAVKEGMASGVVVESRLDKGRGPVATVLVQSGTLRKGDIVLCGQEYGRVRAMRDEIGNEVNEAGPSIPVEILGLSGVPAAGDEATVVRDERKAREVANYRAGKFREVKLARQQKSKLENMFSNMAAGDVAELNIVLKADVQGSVEAIADSLTKLSTEEVKVNIVGSGVGGITETDAVLAEASNAIILGFNVRADASARRAIEAASIDLRYYSIIYQLIDEVKQAMSGMLAPEFKQEIIGLAEVRDVFKSPKLGAIAGCMVTEGLIKRNAPIRVLRDNVVIYEGELESLRRFKDDVAEVKNGYECGIGVKNYNDVRVGDQIEVFETIEIKRTID</sequence>
<name>IF2_VIBVY</name>
<proteinExistence type="inferred from homology"/>
<feature type="chain" id="PRO_0000137282" description="Translation initiation factor IF-2">
    <location>
        <begin position="1"/>
        <end position="907"/>
    </location>
</feature>
<feature type="domain" description="tr-type G">
    <location>
        <begin position="406"/>
        <end position="575"/>
    </location>
</feature>
<feature type="region of interest" description="Disordered" evidence="3">
    <location>
        <begin position="26"/>
        <end position="317"/>
    </location>
</feature>
<feature type="region of interest" description="G1" evidence="1">
    <location>
        <begin position="415"/>
        <end position="422"/>
    </location>
</feature>
<feature type="region of interest" description="G2" evidence="1">
    <location>
        <begin position="440"/>
        <end position="444"/>
    </location>
</feature>
<feature type="region of interest" description="G3" evidence="1">
    <location>
        <begin position="461"/>
        <end position="464"/>
    </location>
</feature>
<feature type="region of interest" description="G4" evidence="1">
    <location>
        <begin position="515"/>
        <end position="518"/>
    </location>
</feature>
<feature type="region of interest" description="G5" evidence="1">
    <location>
        <begin position="551"/>
        <end position="553"/>
    </location>
</feature>
<feature type="compositionally biased region" description="Basic and acidic residues" evidence="3">
    <location>
        <begin position="28"/>
        <end position="44"/>
    </location>
</feature>
<feature type="compositionally biased region" description="Basic and acidic residues" evidence="3">
    <location>
        <begin position="101"/>
        <end position="248"/>
    </location>
</feature>
<feature type="compositionally biased region" description="Basic residues" evidence="3">
    <location>
        <begin position="299"/>
        <end position="308"/>
    </location>
</feature>
<feature type="binding site" evidence="2">
    <location>
        <begin position="415"/>
        <end position="422"/>
    </location>
    <ligand>
        <name>GTP</name>
        <dbReference type="ChEBI" id="CHEBI:37565"/>
    </ligand>
</feature>
<feature type="binding site" evidence="2">
    <location>
        <begin position="461"/>
        <end position="465"/>
    </location>
    <ligand>
        <name>GTP</name>
        <dbReference type="ChEBI" id="CHEBI:37565"/>
    </ligand>
</feature>
<feature type="binding site" evidence="2">
    <location>
        <begin position="515"/>
        <end position="518"/>
    </location>
    <ligand>
        <name>GTP</name>
        <dbReference type="ChEBI" id="CHEBI:37565"/>
    </ligand>
</feature>
<reference key="1">
    <citation type="journal article" date="2003" name="Genome Res.">
        <title>Comparative genome analysis of Vibrio vulnificus, a marine pathogen.</title>
        <authorList>
            <person name="Chen C.-Y."/>
            <person name="Wu K.-M."/>
            <person name="Chang Y.-C."/>
            <person name="Chang C.-H."/>
            <person name="Tsai H.-C."/>
            <person name="Liao T.-L."/>
            <person name="Liu Y.-M."/>
            <person name="Chen H.-J."/>
            <person name="Shen A.B.-T."/>
            <person name="Li J.-C."/>
            <person name="Su T.-L."/>
            <person name="Shao C.-P."/>
            <person name="Lee C.-T."/>
            <person name="Hor L.-I."/>
            <person name="Tsai S.-F."/>
        </authorList>
    </citation>
    <scope>NUCLEOTIDE SEQUENCE [LARGE SCALE GENOMIC DNA]</scope>
    <source>
        <strain>YJ016</strain>
    </source>
</reference>
<comment type="function">
    <text evidence="2">One of the essential components for the initiation of protein synthesis. Protects formylmethionyl-tRNA from spontaneous hydrolysis and promotes its binding to the 30S ribosomal subunits. Also involved in the hydrolysis of GTP during the formation of the 70S ribosomal complex.</text>
</comment>
<comment type="subcellular location">
    <subcellularLocation>
        <location evidence="2">Cytoplasm</location>
    </subcellularLocation>
</comment>
<comment type="similarity">
    <text evidence="2">Belongs to the TRAFAC class translation factor GTPase superfamily. Classic translation factor GTPase family. IF-2 subfamily.</text>
</comment>
<dbReference type="EMBL" id="BA000037">
    <property type="protein sequence ID" value="BAC95472.1"/>
    <property type="molecule type" value="Genomic_DNA"/>
</dbReference>
<dbReference type="RefSeq" id="WP_011151080.1">
    <property type="nucleotide sequence ID" value="NC_005139.1"/>
</dbReference>
<dbReference type="SMR" id="Q7MI09"/>
<dbReference type="STRING" id="672.VV93_v1c24250"/>
<dbReference type="KEGG" id="vvy:VV2708"/>
<dbReference type="PATRIC" id="fig|196600.6.peg.2704"/>
<dbReference type="eggNOG" id="COG0532">
    <property type="taxonomic scope" value="Bacteria"/>
</dbReference>
<dbReference type="HOGENOM" id="CLU_006301_6_3_6"/>
<dbReference type="Proteomes" id="UP000002675">
    <property type="component" value="Chromosome I"/>
</dbReference>
<dbReference type="GO" id="GO:0005829">
    <property type="term" value="C:cytosol"/>
    <property type="evidence" value="ECO:0007669"/>
    <property type="project" value="TreeGrafter"/>
</dbReference>
<dbReference type="GO" id="GO:0005525">
    <property type="term" value="F:GTP binding"/>
    <property type="evidence" value="ECO:0007669"/>
    <property type="project" value="UniProtKB-KW"/>
</dbReference>
<dbReference type="GO" id="GO:0003924">
    <property type="term" value="F:GTPase activity"/>
    <property type="evidence" value="ECO:0007669"/>
    <property type="project" value="UniProtKB-UniRule"/>
</dbReference>
<dbReference type="GO" id="GO:0097216">
    <property type="term" value="F:guanosine tetraphosphate binding"/>
    <property type="evidence" value="ECO:0007669"/>
    <property type="project" value="UniProtKB-ARBA"/>
</dbReference>
<dbReference type="GO" id="GO:0003743">
    <property type="term" value="F:translation initiation factor activity"/>
    <property type="evidence" value="ECO:0007669"/>
    <property type="project" value="UniProtKB-UniRule"/>
</dbReference>
<dbReference type="CDD" id="cd01887">
    <property type="entry name" value="IF2_eIF5B"/>
    <property type="match status" value="1"/>
</dbReference>
<dbReference type="CDD" id="cd03702">
    <property type="entry name" value="IF2_mtIF2_II"/>
    <property type="match status" value="1"/>
</dbReference>
<dbReference type="CDD" id="cd03692">
    <property type="entry name" value="mtIF2_IVc"/>
    <property type="match status" value="1"/>
</dbReference>
<dbReference type="FunFam" id="2.40.30.10:FF:000007">
    <property type="entry name" value="Translation initiation factor IF-2"/>
    <property type="match status" value="1"/>
</dbReference>
<dbReference type="FunFam" id="2.40.30.10:FF:000008">
    <property type="entry name" value="Translation initiation factor IF-2"/>
    <property type="match status" value="1"/>
</dbReference>
<dbReference type="FunFam" id="3.30.56.50:FF:000001">
    <property type="entry name" value="Translation initiation factor IF-2"/>
    <property type="match status" value="1"/>
</dbReference>
<dbReference type="FunFam" id="3.40.50.10050:FF:000001">
    <property type="entry name" value="Translation initiation factor IF-2"/>
    <property type="match status" value="1"/>
</dbReference>
<dbReference type="FunFam" id="3.40.50.300:FF:000019">
    <property type="entry name" value="Translation initiation factor IF-2"/>
    <property type="match status" value="1"/>
</dbReference>
<dbReference type="Gene3D" id="3.40.50.300">
    <property type="entry name" value="P-loop containing nucleotide triphosphate hydrolases"/>
    <property type="match status" value="1"/>
</dbReference>
<dbReference type="Gene3D" id="3.30.56.50">
    <property type="entry name" value="Putative DNA-binding domain, N-terminal subdomain of bacterial translation initiation factor IF2"/>
    <property type="match status" value="1"/>
</dbReference>
<dbReference type="Gene3D" id="2.40.30.10">
    <property type="entry name" value="Translation factors"/>
    <property type="match status" value="2"/>
</dbReference>
<dbReference type="Gene3D" id="3.40.50.10050">
    <property type="entry name" value="Translation initiation factor IF- 2, domain 3"/>
    <property type="match status" value="1"/>
</dbReference>
<dbReference type="HAMAP" id="MF_00100_B">
    <property type="entry name" value="IF_2_B"/>
    <property type="match status" value="1"/>
</dbReference>
<dbReference type="InterPro" id="IPR009061">
    <property type="entry name" value="DNA-bd_dom_put_sf"/>
</dbReference>
<dbReference type="InterPro" id="IPR053905">
    <property type="entry name" value="EF-G-like_DII"/>
</dbReference>
<dbReference type="InterPro" id="IPR004161">
    <property type="entry name" value="EFTu-like_2"/>
</dbReference>
<dbReference type="InterPro" id="IPR013575">
    <property type="entry name" value="IF2_assoc_dom_bac"/>
</dbReference>
<dbReference type="InterPro" id="IPR044145">
    <property type="entry name" value="IF2_II"/>
</dbReference>
<dbReference type="InterPro" id="IPR006847">
    <property type="entry name" value="IF2_N"/>
</dbReference>
<dbReference type="InterPro" id="IPR027417">
    <property type="entry name" value="P-loop_NTPase"/>
</dbReference>
<dbReference type="InterPro" id="IPR005225">
    <property type="entry name" value="Small_GTP-bd"/>
</dbReference>
<dbReference type="InterPro" id="IPR000795">
    <property type="entry name" value="T_Tr_GTP-bd_dom"/>
</dbReference>
<dbReference type="InterPro" id="IPR000178">
    <property type="entry name" value="TF_IF2_bacterial-like"/>
</dbReference>
<dbReference type="InterPro" id="IPR015760">
    <property type="entry name" value="TIF_IF2"/>
</dbReference>
<dbReference type="InterPro" id="IPR023115">
    <property type="entry name" value="TIF_IF2_dom3"/>
</dbReference>
<dbReference type="InterPro" id="IPR036925">
    <property type="entry name" value="TIF_IF2_dom3_sf"/>
</dbReference>
<dbReference type="InterPro" id="IPR009000">
    <property type="entry name" value="Transl_B-barrel_sf"/>
</dbReference>
<dbReference type="NCBIfam" id="TIGR00487">
    <property type="entry name" value="IF-2"/>
    <property type="match status" value="1"/>
</dbReference>
<dbReference type="NCBIfam" id="TIGR00231">
    <property type="entry name" value="small_GTP"/>
    <property type="match status" value="1"/>
</dbReference>
<dbReference type="PANTHER" id="PTHR43381:SF5">
    <property type="entry name" value="TR-TYPE G DOMAIN-CONTAINING PROTEIN"/>
    <property type="match status" value="1"/>
</dbReference>
<dbReference type="PANTHER" id="PTHR43381">
    <property type="entry name" value="TRANSLATION INITIATION FACTOR IF-2-RELATED"/>
    <property type="match status" value="1"/>
</dbReference>
<dbReference type="Pfam" id="PF22042">
    <property type="entry name" value="EF-G_D2"/>
    <property type="match status" value="1"/>
</dbReference>
<dbReference type="Pfam" id="PF00009">
    <property type="entry name" value="GTP_EFTU"/>
    <property type="match status" value="1"/>
</dbReference>
<dbReference type="Pfam" id="PF03144">
    <property type="entry name" value="GTP_EFTU_D2"/>
    <property type="match status" value="1"/>
</dbReference>
<dbReference type="Pfam" id="PF11987">
    <property type="entry name" value="IF-2"/>
    <property type="match status" value="1"/>
</dbReference>
<dbReference type="Pfam" id="PF08364">
    <property type="entry name" value="IF2_assoc"/>
    <property type="match status" value="1"/>
</dbReference>
<dbReference type="Pfam" id="PF04760">
    <property type="entry name" value="IF2_N"/>
    <property type="match status" value="2"/>
</dbReference>
<dbReference type="SUPFAM" id="SSF52156">
    <property type="entry name" value="Initiation factor IF2/eIF5b, domain 3"/>
    <property type="match status" value="1"/>
</dbReference>
<dbReference type="SUPFAM" id="SSF52540">
    <property type="entry name" value="P-loop containing nucleoside triphosphate hydrolases"/>
    <property type="match status" value="1"/>
</dbReference>
<dbReference type="SUPFAM" id="SSF46955">
    <property type="entry name" value="Putative DNA-binding domain"/>
    <property type="match status" value="1"/>
</dbReference>
<dbReference type="SUPFAM" id="SSF50447">
    <property type="entry name" value="Translation proteins"/>
    <property type="match status" value="2"/>
</dbReference>
<dbReference type="PROSITE" id="PS51722">
    <property type="entry name" value="G_TR_2"/>
    <property type="match status" value="1"/>
</dbReference>
<dbReference type="PROSITE" id="PS01176">
    <property type="entry name" value="IF2"/>
    <property type="match status" value="1"/>
</dbReference>
<protein>
    <recommendedName>
        <fullName evidence="2">Translation initiation factor IF-2</fullName>
    </recommendedName>
</protein>
<accession>Q7MI09</accession>
<keyword id="KW-0963">Cytoplasm</keyword>
<keyword id="KW-0342">GTP-binding</keyword>
<keyword id="KW-0396">Initiation factor</keyword>
<keyword id="KW-0547">Nucleotide-binding</keyword>
<keyword id="KW-0648">Protein biosynthesis</keyword>
<organism>
    <name type="scientific">Vibrio vulnificus (strain YJ016)</name>
    <dbReference type="NCBI Taxonomy" id="196600"/>
    <lineage>
        <taxon>Bacteria</taxon>
        <taxon>Pseudomonadati</taxon>
        <taxon>Pseudomonadota</taxon>
        <taxon>Gammaproteobacteria</taxon>
        <taxon>Vibrionales</taxon>
        <taxon>Vibrionaceae</taxon>
        <taxon>Vibrio</taxon>
    </lineage>
</organism>